<accession>Q6YRW7</accession>
<comment type="function">
    <text evidence="3">Catalyzes the reduction of arsenate [As(V)] to arsenite [As(III)]. Does not constitute the major arsenate reductase in cells: essential only in the absence of ArsC (AC P74313).</text>
</comment>
<comment type="catalytic activity">
    <reaction evidence="3">
        <text>[glutaredoxin]-dithiol + arsenate + glutathione + H(+) = glutathionyl-S-S-[glutaredoxin] + arsenite + H2O</text>
        <dbReference type="Rhea" id="RHEA:22016"/>
        <dbReference type="Rhea" id="RHEA-COMP:10729"/>
        <dbReference type="Rhea" id="RHEA-COMP:17668"/>
        <dbReference type="ChEBI" id="CHEBI:15377"/>
        <dbReference type="ChEBI" id="CHEBI:15378"/>
        <dbReference type="ChEBI" id="CHEBI:29242"/>
        <dbReference type="ChEBI" id="CHEBI:29950"/>
        <dbReference type="ChEBI" id="CHEBI:48597"/>
        <dbReference type="ChEBI" id="CHEBI:57925"/>
        <dbReference type="ChEBI" id="CHEBI:146199"/>
        <dbReference type="EC" id="1.20.4.1"/>
    </reaction>
</comment>
<comment type="similarity">
    <text evidence="5">Belongs to the ArsC family.</text>
</comment>
<geneLocation type="plasmid">
    <name>pSYSX</name>
</geneLocation>
<name>ARSI2_SYNY3</name>
<protein>
    <recommendedName>
        <fullName>Arsenate reductase ArsI2</fullName>
        <ecNumber evidence="3">1.20.4.1</ecNumber>
    </recommendedName>
</protein>
<evidence type="ECO:0000250" key="1">
    <source>
        <dbReference type="UniProtKB" id="P08692"/>
    </source>
</evidence>
<evidence type="ECO:0000255" key="2">
    <source>
        <dbReference type="PROSITE-ProRule" id="PRU01282"/>
    </source>
</evidence>
<evidence type="ECO:0000269" key="3">
    <source>
    </source>
</evidence>
<evidence type="ECO:0000303" key="4">
    <source>
    </source>
</evidence>
<evidence type="ECO:0000305" key="5"/>
<keyword id="KW-0560">Oxidoreductase</keyword>
<keyword id="KW-0614">Plasmid</keyword>
<keyword id="KW-1185">Reference proteome</keyword>
<dbReference type="EC" id="1.20.4.1" evidence="3"/>
<dbReference type="EMBL" id="AP006585">
    <property type="protein sequence ID" value="BAD02094.1"/>
    <property type="molecule type" value="Genomic_DNA"/>
</dbReference>
<dbReference type="SMR" id="Q6YRW7"/>
<dbReference type="EnsemblBacteria" id="BAD02094">
    <property type="protein sequence ID" value="BAD02094"/>
    <property type="gene ID" value="BAD02094"/>
</dbReference>
<dbReference type="KEGG" id="syn:slr6037"/>
<dbReference type="InParanoid" id="Q6YRW7"/>
<dbReference type="PhylomeDB" id="Q6YRW7"/>
<dbReference type="Proteomes" id="UP000001425">
    <property type="component" value="Plasmid pSYSX"/>
</dbReference>
<dbReference type="GO" id="GO:0008794">
    <property type="term" value="F:arsenate reductase (glutaredoxin) activity"/>
    <property type="evidence" value="ECO:0007669"/>
    <property type="project" value="UniProtKB-EC"/>
</dbReference>
<dbReference type="GO" id="GO:0046685">
    <property type="term" value="P:response to arsenic-containing substance"/>
    <property type="evidence" value="ECO:0000318"/>
    <property type="project" value="GO_Central"/>
</dbReference>
<dbReference type="CDD" id="cd03034">
    <property type="entry name" value="ArsC_ArsC"/>
    <property type="match status" value="1"/>
</dbReference>
<dbReference type="Gene3D" id="3.40.30.10">
    <property type="entry name" value="Glutaredoxin"/>
    <property type="match status" value="1"/>
</dbReference>
<dbReference type="InterPro" id="IPR006659">
    <property type="entry name" value="Arsenate_reductase"/>
</dbReference>
<dbReference type="InterPro" id="IPR006660">
    <property type="entry name" value="Arsenate_reductase-like"/>
</dbReference>
<dbReference type="InterPro" id="IPR036249">
    <property type="entry name" value="Thioredoxin-like_sf"/>
</dbReference>
<dbReference type="PANTHER" id="PTHR30041">
    <property type="entry name" value="ARSENATE REDUCTASE"/>
    <property type="match status" value="1"/>
</dbReference>
<dbReference type="PANTHER" id="PTHR30041:SF5">
    <property type="entry name" value="ARSENATE REDUCTASE-RELATED"/>
    <property type="match status" value="1"/>
</dbReference>
<dbReference type="Pfam" id="PF03960">
    <property type="entry name" value="ArsC"/>
    <property type="match status" value="1"/>
</dbReference>
<dbReference type="SUPFAM" id="SSF52833">
    <property type="entry name" value="Thioredoxin-like"/>
    <property type="match status" value="1"/>
</dbReference>
<dbReference type="PROSITE" id="PS51353">
    <property type="entry name" value="ARSC"/>
    <property type="match status" value="1"/>
</dbReference>
<gene>
    <name evidence="4" type="primary">arsI2</name>
    <name type="ordered locus">slr6037</name>
</gene>
<organism>
    <name type="scientific">Synechocystis sp. (strain ATCC 27184 / PCC 6803 / Kazusa)</name>
    <dbReference type="NCBI Taxonomy" id="1111708"/>
    <lineage>
        <taxon>Bacteria</taxon>
        <taxon>Bacillati</taxon>
        <taxon>Cyanobacteriota</taxon>
        <taxon>Cyanophyceae</taxon>
        <taxon>Synechococcales</taxon>
        <taxon>Merismopediaceae</taxon>
        <taxon>Synechocystis</taxon>
    </lineage>
</organism>
<reference key="1">
    <citation type="journal article" date="2003" name="DNA Res.">
        <title>Structural analysis of four large plasmids harboring in a unicellular cyanobacterium, Synechocystis sp. PCC 6803.</title>
        <authorList>
            <person name="Kaneko T."/>
            <person name="Nakamura Y."/>
            <person name="Sasamoto S."/>
            <person name="Watanabe A."/>
            <person name="Kohara M."/>
            <person name="Matsumoto M."/>
            <person name="Shimpo S."/>
            <person name="Yamada M."/>
            <person name="Tabata S."/>
        </authorList>
    </citation>
    <scope>NUCLEOTIDE SEQUENCE [LARGE SCALE GENOMIC DNA]</scope>
    <source>
        <strain>ATCC 27184 / PCC 6803 / Kazusa</strain>
        <plasmid>pSYSX</plasmid>
    </source>
</reference>
<reference key="2">
    <citation type="journal article" date="2009" name="J. Bacteriol.">
        <title>The glutathione/glutaredoxin system is essential for arsenate reduction in Synechocystis sp. strain PCC 6803.</title>
        <authorList>
            <person name="Lopez-Maury L."/>
            <person name="Sanchez-Riego A.M."/>
            <person name="Reyes J.C."/>
            <person name="Florencio F.J."/>
        </authorList>
    </citation>
    <scope>FUNCTION</scope>
    <scope>CATALYTIC ACTIVITY</scope>
    <source>
        <strain>ATCC 27184 / PCC 6803 / N-1</strain>
    </source>
</reference>
<feature type="chain" id="PRO_0000429129" description="Arsenate reductase ArsI2">
    <location>
        <begin position="1"/>
        <end position="140"/>
    </location>
</feature>
<feature type="active site" description="Nucleophile; cysteine thioarsenate intermediate" evidence="1 2">
    <location>
        <position position="10"/>
    </location>
</feature>
<feature type="site" description="Important for activity" evidence="1">
    <location>
        <position position="6"/>
    </location>
</feature>
<feature type="site" description="Important for activity" evidence="1">
    <location>
        <position position="58"/>
    </location>
</feature>
<feature type="site" description="Important for activity" evidence="1">
    <location>
        <position position="92"/>
    </location>
</feature>
<feature type="site" description="Important for activity" evidence="1">
    <location>
        <position position="105"/>
    </location>
</feature>
<proteinExistence type="evidence at protein level"/>
<sequence length="140" mass="15558">MIVIYHNPDCGTSRNVLQLIEAAGYLPQVIEYVKEGWTKPQLLGLFAAADLTPRSALRTTKSPAAELNLLEETVTDAQILDAMVEYPILVNRPIVCTPKGVRLCRPSEVVLDLLDHWPSGPFAKEDGELIIDERGNRVYT</sequence>